<sequence length="536" mass="57081">MVLEDLGKRINGAFANLSKGGDIDEALDAMLKEVCSALLESDVNIKLVSQLRQKVKNSVKATPNGASKKKVIQKALFDELVNLVGVDESAASAAKFKPQKGKSNVVMFVGLQGSGKTTSCTKLAVYYQRRGFKVGLVCADTFRAGAFDQLKQNATKAKIPFFGSYTETDPVAVAAEGVAKFKKEKFEIIIVDTSGRHRQESELFTEMVDIGAAVKPDSTIMVLDASIGQAAEPQSRAFKDASDFGSIILTKMDGHAKGGGAISAVAATNTPIIFIGTGEHIHDLEAFSPKQFISKLLGIGDLQGLMETMQSLNLDQKKTMEHIQEGIFTLADLRDQMGNMLKMGSLSSIAGMIPGLSGMASSISDEEGTRRIKRMIYILDSMNQKELDSDGSIFKEVPSRITRVARGSGTSIREVEEVLQQQKMMASMASRMGGKNGMMSRMQNAQNNPAQMAAAQRRAQQMMGGGAGGMPGMGGMPGMGGMPGMGGMPGMGGGMPDMSALQGMFPGGMPDMGQMMNMVQNNPQMKAMARSMGLGI</sequence>
<dbReference type="EC" id="3.6.5.4" evidence="3"/>
<dbReference type="EMBL" id="U42418">
    <property type="protein sequence ID" value="AAC49735.1"/>
    <property type="molecule type" value="Genomic_DNA"/>
</dbReference>
<dbReference type="EMBL" id="CR382132">
    <property type="protein sequence ID" value="CAG77773.1"/>
    <property type="molecule type" value="Genomic_DNA"/>
</dbReference>
<dbReference type="RefSeq" id="XP_504966.1">
    <property type="nucleotide sequence ID" value="XM_504966.1"/>
</dbReference>
<dbReference type="SMR" id="Q99150"/>
<dbReference type="FunCoup" id="Q99150">
    <property type="interactions" value="1037"/>
</dbReference>
<dbReference type="STRING" id="284591.Q99150"/>
<dbReference type="EnsemblFungi" id="CAG77773">
    <property type="protein sequence ID" value="CAG77773"/>
    <property type="gene ID" value="YALI0_F03839g"/>
</dbReference>
<dbReference type="KEGG" id="yli:2908963"/>
<dbReference type="VEuPathDB" id="FungiDB:YALI0_F03839g"/>
<dbReference type="HOGENOM" id="CLU_009301_6_1_1"/>
<dbReference type="InParanoid" id="Q99150"/>
<dbReference type="OMA" id="GMTGQDA"/>
<dbReference type="OrthoDB" id="116397at4891"/>
<dbReference type="Proteomes" id="UP000001300">
    <property type="component" value="Chromosome F"/>
</dbReference>
<dbReference type="GO" id="GO:0005829">
    <property type="term" value="C:cytosol"/>
    <property type="evidence" value="ECO:0000318"/>
    <property type="project" value="GO_Central"/>
</dbReference>
<dbReference type="GO" id="GO:0005783">
    <property type="term" value="C:endoplasmic reticulum"/>
    <property type="evidence" value="ECO:0007669"/>
    <property type="project" value="UniProtKB-SubCell"/>
</dbReference>
<dbReference type="GO" id="GO:0005786">
    <property type="term" value="C:signal recognition particle, endoplasmic reticulum targeting"/>
    <property type="evidence" value="ECO:0000318"/>
    <property type="project" value="GO_Central"/>
</dbReference>
<dbReference type="GO" id="GO:0008312">
    <property type="term" value="F:7S RNA binding"/>
    <property type="evidence" value="ECO:0000318"/>
    <property type="project" value="GO_Central"/>
</dbReference>
<dbReference type="GO" id="GO:0016887">
    <property type="term" value="F:ATP hydrolysis activity"/>
    <property type="evidence" value="ECO:0007669"/>
    <property type="project" value="InterPro"/>
</dbReference>
<dbReference type="GO" id="GO:0030942">
    <property type="term" value="F:endoplasmic reticulum signal peptide binding"/>
    <property type="evidence" value="ECO:0000318"/>
    <property type="project" value="GO_Central"/>
</dbReference>
<dbReference type="GO" id="GO:0005525">
    <property type="term" value="F:GTP binding"/>
    <property type="evidence" value="ECO:0007669"/>
    <property type="project" value="UniProtKB-KW"/>
</dbReference>
<dbReference type="GO" id="GO:0003924">
    <property type="term" value="F:GTPase activity"/>
    <property type="evidence" value="ECO:0007669"/>
    <property type="project" value="EnsemblFungi"/>
</dbReference>
<dbReference type="GO" id="GO:0006616">
    <property type="term" value="P:SRP-dependent cotranslational protein targeting to membrane, translocation"/>
    <property type="evidence" value="ECO:0000318"/>
    <property type="project" value="GO_Central"/>
</dbReference>
<dbReference type="CDD" id="cd17875">
    <property type="entry name" value="SRP54_G"/>
    <property type="match status" value="1"/>
</dbReference>
<dbReference type="FunFam" id="1.10.260.30:FF:000003">
    <property type="entry name" value="Signal recognition particle 54 kDa protein"/>
    <property type="match status" value="1"/>
</dbReference>
<dbReference type="FunFam" id="3.40.50.300:FF:000022">
    <property type="entry name" value="Signal recognition particle 54 kDa subunit"/>
    <property type="match status" value="1"/>
</dbReference>
<dbReference type="Gene3D" id="3.40.50.300">
    <property type="entry name" value="P-loop containing nucleotide triphosphate hydrolases"/>
    <property type="match status" value="1"/>
</dbReference>
<dbReference type="Gene3D" id="1.20.120.140">
    <property type="entry name" value="Signal recognition particle SRP54, nucleotide-binding domain"/>
    <property type="match status" value="1"/>
</dbReference>
<dbReference type="Gene3D" id="1.10.260.30">
    <property type="entry name" value="Signal recognition particle, SRP54 subunit, M-domain"/>
    <property type="match status" value="1"/>
</dbReference>
<dbReference type="HAMAP" id="MF_00306">
    <property type="entry name" value="SRP54"/>
    <property type="match status" value="1"/>
</dbReference>
<dbReference type="InterPro" id="IPR003593">
    <property type="entry name" value="AAA+_ATPase"/>
</dbReference>
<dbReference type="InterPro" id="IPR027417">
    <property type="entry name" value="P-loop_NTPase"/>
</dbReference>
<dbReference type="InterPro" id="IPR036891">
    <property type="entry name" value="Signal_recog_part_SRP54_M_sf"/>
</dbReference>
<dbReference type="InterPro" id="IPR013822">
    <property type="entry name" value="Signal_recog_particl_SRP54_hlx"/>
</dbReference>
<dbReference type="InterPro" id="IPR004125">
    <property type="entry name" value="Signal_recog_particle_SRP54_M"/>
</dbReference>
<dbReference type="InterPro" id="IPR036225">
    <property type="entry name" value="SRP/SRP_N"/>
</dbReference>
<dbReference type="InterPro" id="IPR022941">
    <property type="entry name" value="SRP54"/>
</dbReference>
<dbReference type="InterPro" id="IPR006325">
    <property type="entry name" value="SRP54_euk"/>
</dbReference>
<dbReference type="InterPro" id="IPR000897">
    <property type="entry name" value="SRP54_GTPase_dom"/>
</dbReference>
<dbReference type="InterPro" id="IPR042101">
    <property type="entry name" value="SRP54_N_sf"/>
</dbReference>
<dbReference type="NCBIfam" id="TIGR01425">
    <property type="entry name" value="SRP54_euk"/>
    <property type="match status" value="1"/>
</dbReference>
<dbReference type="PANTHER" id="PTHR11564">
    <property type="entry name" value="SIGNAL RECOGNITION PARTICLE 54K PROTEIN SRP54"/>
    <property type="match status" value="1"/>
</dbReference>
<dbReference type="PANTHER" id="PTHR11564:SF5">
    <property type="entry name" value="SIGNAL RECOGNITION PARTICLE SUBUNIT SRP54"/>
    <property type="match status" value="1"/>
</dbReference>
<dbReference type="Pfam" id="PF00448">
    <property type="entry name" value="SRP54"/>
    <property type="match status" value="1"/>
</dbReference>
<dbReference type="Pfam" id="PF02881">
    <property type="entry name" value="SRP54_N"/>
    <property type="match status" value="1"/>
</dbReference>
<dbReference type="Pfam" id="PF02978">
    <property type="entry name" value="SRP_SPB"/>
    <property type="match status" value="1"/>
</dbReference>
<dbReference type="SMART" id="SM00382">
    <property type="entry name" value="AAA"/>
    <property type="match status" value="1"/>
</dbReference>
<dbReference type="SMART" id="SM00962">
    <property type="entry name" value="SRP54"/>
    <property type="match status" value="1"/>
</dbReference>
<dbReference type="SMART" id="SM00963">
    <property type="entry name" value="SRP54_N"/>
    <property type="match status" value="1"/>
</dbReference>
<dbReference type="SUPFAM" id="SSF47364">
    <property type="entry name" value="Domain of the SRP/SRP receptor G-proteins"/>
    <property type="match status" value="1"/>
</dbReference>
<dbReference type="SUPFAM" id="SSF52540">
    <property type="entry name" value="P-loop containing nucleoside triphosphate hydrolases"/>
    <property type="match status" value="1"/>
</dbReference>
<dbReference type="SUPFAM" id="SSF47446">
    <property type="entry name" value="Signal peptide-binding domain"/>
    <property type="match status" value="1"/>
</dbReference>
<dbReference type="PROSITE" id="PS00300">
    <property type="entry name" value="SRP54"/>
    <property type="match status" value="1"/>
</dbReference>
<feature type="chain" id="PRO_0000101202" description="Signal recognition particle subunit SRP54">
    <location>
        <begin position="1"/>
        <end position="536"/>
    </location>
</feature>
<feature type="region of interest" description="G-domain">
    <location>
        <begin position="1"/>
        <end position="297"/>
    </location>
</feature>
<feature type="region of interest" description="M-domain">
    <location>
        <begin position="298"/>
        <end position="536"/>
    </location>
</feature>
<feature type="binding site" evidence="1">
    <location>
        <begin position="110"/>
        <end position="117"/>
    </location>
    <ligand>
        <name>GTP</name>
        <dbReference type="ChEBI" id="CHEBI:37565"/>
    </ligand>
</feature>
<feature type="binding site" evidence="1">
    <location>
        <begin position="192"/>
        <end position="196"/>
    </location>
    <ligand>
        <name>GTP</name>
        <dbReference type="ChEBI" id="CHEBI:37565"/>
    </ligand>
</feature>
<feature type="binding site" evidence="1">
    <location>
        <begin position="250"/>
        <end position="253"/>
    </location>
    <ligand>
        <name>GTP</name>
        <dbReference type="ChEBI" id="CHEBI:37565"/>
    </ligand>
</feature>
<feature type="sequence conflict" description="In Ref. 1; AAC49735." evidence="4" ref="1">
    <original>G</original>
    <variation>E</variation>
    <location>
        <position position="409"/>
    </location>
</feature>
<comment type="function">
    <text evidence="2">Signal-recognition-particle (SRP) assembly has a crucial role in targeting secretory proteins to the rough endoplasmic reticulum (ER) membrane. SRP is required for the cotranslational protein translocation for ER import and preferentially recognizes strongly hydrophobic signal sequences. It is involved in targeting the nascent chain-ribosome (RNC) complex to the ER and is proposed to participate in the arrest of nascent chain elongation during membrane targeting. SRP54 binds to the signal sequence of presecretory protein when they emerge from the ribosomes. SRP54 interacts with the scR1 RNA and mediates the association of the resulting SRP-RNC complex with the signal recognition particle receptor (SR) via its alpha subunit SRP101. Both, SRP54 and SRP101, are locked in their GTP bound forms in the SRP-RNC-SR complex, which dissociates upon transferring the signal sequence to the protein-conducting channel (translocon). After signal sequence transfer, SRP54 and SRP101 act as reciprocal GTPase-activating proteins (GAPs), thereby resolving their association.</text>
</comment>
<comment type="catalytic activity">
    <reaction evidence="3">
        <text>GTP + H2O = GDP + phosphate + H(+)</text>
        <dbReference type="Rhea" id="RHEA:19669"/>
        <dbReference type="ChEBI" id="CHEBI:15377"/>
        <dbReference type="ChEBI" id="CHEBI:15378"/>
        <dbReference type="ChEBI" id="CHEBI:37565"/>
        <dbReference type="ChEBI" id="CHEBI:43474"/>
        <dbReference type="ChEBI" id="CHEBI:58189"/>
        <dbReference type="EC" id="3.6.5.4"/>
    </reaction>
    <physiologicalReaction direction="left-to-right" evidence="3">
        <dbReference type="Rhea" id="RHEA:19670"/>
    </physiologicalReaction>
</comment>
<comment type="subunit">
    <text evidence="2">Fungal signal recognition particle consists of a 7S RNA molecule (SCR1) and at least seven protein subunits: SRP72, SRP68, SRP54, SEC65, SRP21, SRP14 and SRP7.</text>
</comment>
<comment type="subcellular location">
    <subcellularLocation>
        <location evidence="2">Cytoplasm</location>
    </subcellularLocation>
    <subcellularLocation>
        <location evidence="2">Endoplasmic reticulum</location>
    </subcellularLocation>
</comment>
<comment type="domain">
    <text evidence="3">The NG domain, also named G domain, is a special guanosine triphosphatase (GTPase) domain, which binds GTP and forms a guanosine 5'-triphosphate (GTP)-dependent complex with a homologous NG domain in the SRP receptor subunit SRP101. The two NG domains undergo cooperative rearrangements upon their assembly, which culminate in the reciprocal activation of the GTPase activity of one another. SRP receptor compaction upon binding with cargo-loaded SRP and GTPase rearrangement drive SRP-mediated cotranslational protein translocation into the ER.</text>
</comment>
<comment type="domain">
    <text evidence="3">The M domain binds the 7SL RNA and the signal sequence of presecretory proteins.</text>
</comment>
<comment type="similarity">
    <text evidence="4">Belongs to the GTP-binding SRP family. SRP54 subfamily.</text>
</comment>
<proteinExistence type="inferred from homology"/>
<protein>
    <recommendedName>
        <fullName>Signal recognition particle subunit SRP54</fullName>
        <ecNumber evidence="3">3.6.5.4</ecNumber>
    </recommendedName>
    <alternativeName>
        <fullName>Signal recognition particle 54 kDa protein homolog</fullName>
    </alternativeName>
</protein>
<accession>Q99150</accession>
<accession>Q6C2Z6</accession>
<evidence type="ECO:0000250" key="1"/>
<evidence type="ECO:0000250" key="2">
    <source>
        <dbReference type="UniProtKB" id="P20424"/>
    </source>
</evidence>
<evidence type="ECO:0000250" key="3">
    <source>
        <dbReference type="UniProtKB" id="P61011"/>
    </source>
</evidence>
<evidence type="ECO:0000305" key="4"/>
<reference key="1">
    <citation type="journal article" date="1997" name="Yeast">
        <title>Yarrowia lipolytica SRP54 homolog and translocation of Kar2p.</title>
        <authorList>
            <person name="Lee I.H."/>
            <person name="Ogrydziak D.M."/>
        </authorList>
    </citation>
    <scope>NUCLEOTIDE SEQUENCE [GENOMIC DNA]</scope>
    <source>
        <strain>ATCC 32338 / CX-161-1B</strain>
    </source>
</reference>
<reference key="2">
    <citation type="journal article" date="2004" name="Nature">
        <title>Genome evolution in yeasts.</title>
        <authorList>
            <person name="Dujon B."/>
            <person name="Sherman D."/>
            <person name="Fischer G."/>
            <person name="Durrens P."/>
            <person name="Casaregola S."/>
            <person name="Lafontaine I."/>
            <person name="de Montigny J."/>
            <person name="Marck C."/>
            <person name="Neuveglise C."/>
            <person name="Talla E."/>
            <person name="Goffard N."/>
            <person name="Frangeul L."/>
            <person name="Aigle M."/>
            <person name="Anthouard V."/>
            <person name="Babour A."/>
            <person name="Barbe V."/>
            <person name="Barnay S."/>
            <person name="Blanchin S."/>
            <person name="Beckerich J.-M."/>
            <person name="Beyne E."/>
            <person name="Bleykasten C."/>
            <person name="Boisrame A."/>
            <person name="Boyer J."/>
            <person name="Cattolico L."/>
            <person name="Confanioleri F."/>
            <person name="de Daruvar A."/>
            <person name="Despons L."/>
            <person name="Fabre E."/>
            <person name="Fairhead C."/>
            <person name="Ferry-Dumazet H."/>
            <person name="Groppi A."/>
            <person name="Hantraye F."/>
            <person name="Hennequin C."/>
            <person name="Jauniaux N."/>
            <person name="Joyet P."/>
            <person name="Kachouri R."/>
            <person name="Kerrest A."/>
            <person name="Koszul R."/>
            <person name="Lemaire M."/>
            <person name="Lesur I."/>
            <person name="Ma L."/>
            <person name="Muller H."/>
            <person name="Nicaud J.-M."/>
            <person name="Nikolski M."/>
            <person name="Oztas S."/>
            <person name="Ozier-Kalogeropoulos O."/>
            <person name="Pellenz S."/>
            <person name="Potier S."/>
            <person name="Richard G.-F."/>
            <person name="Straub M.-L."/>
            <person name="Suleau A."/>
            <person name="Swennen D."/>
            <person name="Tekaia F."/>
            <person name="Wesolowski-Louvel M."/>
            <person name="Westhof E."/>
            <person name="Wirth B."/>
            <person name="Zeniou-Meyer M."/>
            <person name="Zivanovic Y."/>
            <person name="Bolotin-Fukuhara M."/>
            <person name="Thierry A."/>
            <person name="Bouchier C."/>
            <person name="Caudron B."/>
            <person name="Scarpelli C."/>
            <person name="Gaillardin C."/>
            <person name="Weissenbach J."/>
            <person name="Wincker P."/>
            <person name="Souciet J.-L."/>
        </authorList>
    </citation>
    <scope>NUCLEOTIDE SEQUENCE [LARGE SCALE GENOMIC DNA]</scope>
    <source>
        <strain>CLIB 122 / E 150</strain>
    </source>
</reference>
<name>SRP54_YARLI</name>
<organism>
    <name type="scientific">Yarrowia lipolytica (strain CLIB 122 / E 150)</name>
    <name type="common">Yeast</name>
    <name type="synonym">Candida lipolytica</name>
    <dbReference type="NCBI Taxonomy" id="284591"/>
    <lineage>
        <taxon>Eukaryota</taxon>
        <taxon>Fungi</taxon>
        <taxon>Dikarya</taxon>
        <taxon>Ascomycota</taxon>
        <taxon>Saccharomycotina</taxon>
        <taxon>Dipodascomycetes</taxon>
        <taxon>Dipodascales</taxon>
        <taxon>Dipodascales incertae sedis</taxon>
        <taxon>Yarrowia</taxon>
    </lineage>
</organism>
<gene>
    <name type="primary">SRP54</name>
    <name type="ordered locus">YALI0F03839g</name>
</gene>
<keyword id="KW-0963">Cytoplasm</keyword>
<keyword id="KW-0256">Endoplasmic reticulum</keyword>
<keyword id="KW-0342">GTP-binding</keyword>
<keyword id="KW-0378">Hydrolase</keyword>
<keyword id="KW-0547">Nucleotide-binding</keyword>
<keyword id="KW-1185">Reference proteome</keyword>
<keyword id="KW-0687">Ribonucleoprotein</keyword>
<keyword id="KW-0694">RNA-binding</keyword>
<keyword id="KW-0733">Signal recognition particle</keyword>